<accession>P17891</accession>
<accession>D6VUV0</accession>
<organism>
    <name type="scientific">Saccharomyces cerevisiae (strain ATCC 204508 / S288c)</name>
    <name type="common">Baker's yeast</name>
    <dbReference type="NCBI Taxonomy" id="559292"/>
    <lineage>
        <taxon>Eukaryota</taxon>
        <taxon>Fungi</taxon>
        <taxon>Dikarya</taxon>
        <taxon>Ascomycota</taxon>
        <taxon>Saccharomycotina</taxon>
        <taxon>Saccharomycetes</taxon>
        <taxon>Saccharomycetales</taxon>
        <taxon>Saccharomycetaceae</taxon>
        <taxon>Saccharomyces</taxon>
    </lineage>
</organism>
<gene>
    <name type="primary">CLC1</name>
    <name type="ordered locus">YGR167W</name>
</gene>
<sequence length="233" mass="26532">MSEKFPPLEDQNIDFTPNDKKDDDTDFLKREAEILGDEFKTEQDDILETEASPAKDDDEIRDFEEQFPDINSANGAVSSDQNGSATVSSGNDNGEADDDFSTFEGANQSTESVKEDRSEVVDQWKQRRAVEIHEKDLKDEELKKELQDEAIKHIDDFYDSYNKKKEQQLEDAAKEAEAFLKKRDEFFGQDNTTWDRALQLINQDDADIIGGRDRSKLKEILLRLKGNAKAPGA</sequence>
<evidence type="ECO:0000255" key="1"/>
<evidence type="ECO:0000256" key="2">
    <source>
        <dbReference type="SAM" id="MobiDB-lite"/>
    </source>
</evidence>
<evidence type="ECO:0000269" key="3">
    <source>
    </source>
</evidence>
<evidence type="ECO:0000269" key="4">
    <source>
    </source>
</evidence>
<evidence type="ECO:0000305" key="5"/>
<evidence type="ECO:0007744" key="6">
    <source>
    </source>
</evidence>
<evidence type="ECO:0007744" key="7">
    <source>
    </source>
</evidence>
<comment type="function">
    <text>Clathrin is the major protein of the polyhedral coat of coated pits and vesicles. In yeast, it is involved in the retention of proteins in an intracellular membrane compartment, presumably the trans-Golgi. The yeast light chain is important for cell growth. The light chain may help to properly orient the assembly/ disassembly of the clathrin coats.</text>
</comment>
<comment type="subunit">
    <text evidence="3">Clathrin coats are formed from molecules containing 3 heavy chains and 3 light chains. Interacts with the auxilin-like clathrin uncoating factor SWA2.</text>
</comment>
<comment type="interaction">
    <interactant intactId="EBI-4758">
        <id>P17891</id>
    </interactant>
    <interactant intactId="EBI-4766">
        <id>P22137</id>
        <label>CHC1</label>
    </interactant>
    <organismsDiffer>false</organismsDiffer>
    <experiments>5</experiments>
</comment>
<comment type="subcellular location">
    <subcellularLocation>
        <location>Cytoplasmic vesicle membrane</location>
        <topology>Peripheral membrane protein</topology>
        <orientation>Cytoplasmic side</orientation>
    </subcellularLocation>
    <subcellularLocation>
        <location>Membrane</location>
        <location>Coated pit</location>
        <topology>Peripheral membrane protein</topology>
        <orientation>Cytoplasmic side</orientation>
    </subcellularLocation>
    <text>Cytoplasmic face of coated pits and vesicles.</text>
</comment>
<comment type="miscellaneous">
    <text>CLC1 binds calcium, and calmodulin in presence of calcium.</text>
</comment>
<comment type="miscellaneous">
    <text evidence="4">Present with 3490 molecules/cell in log phase SD medium.</text>
</comment>
<comment type="similarity">
    <text evidence="5">Belongs to the clathrin light chain family.</text>
</comment>
<name>CLC1_YEAST</name>
<feature type="chain" id="PRO_0000205776" description="Clathrin light chain">
    <location>
        <begin position="1"/>
        <end position="233"/>
    </location>
</feature>
<feature type="region of interest" description="Disordered" evidence="2">
    <location>
        <begin position="1"/>
        <end position="124"/>
    </location>
</feature>
<feature type="region of interest" description="Involved in binding clathrin heavy chain" evidence="1">
    <location>
        <begin position="144"/>
        <end position="204"/>
    </location>
</feature>
<feature type="coiled-coil region" evidence="1">
    <location>
        <begin position="125"/>
        <end position="186"/>
    </location>
</feature>
<feature type="compositionally biased region" description="Basic and acidic residues" evidence="2">
    <location>
        <begin position="17"/>
        <end position="43"/>
    </location>
</feature>
<feature type="compositionally biased region" description="Acidic residues" evidence="2">
    <location>
        <begin position="56"/>
        <end position="67"/>
    </location>
</feature>
<feature type="compositionally biased region" description="Polar residues" evidence="2">
    <location>
        <begin position="69"/>
        <end position="92"/>
    </location>
</feature>
<feature type="compositionally biased region" description="Basic and acidic residues" evidence="2">
    <location>
        <begin position="112"/>
        <end position="124"/>
    </location>
</feature>
<feature type="modified residue" description="Phosphothreonine" evidence="6">
    <location>
        <position position="49"/>
    </location>
</feature>
<feature type="modified residue" description="Phosphoserine" evidence="6 7">
    <location>
        <position position="52"/>
    </location>
</feature>
<protein>
    <recommendedName>
        <fullName>Clathrin light chain</fullName>
        <shortName>CLC</shortName>
    </recommendedName>
</protein>
<keyword id="KW-0106">Calcium</keyword>
<keyword id="KW-0112">Calmodulin-binding</keyword>
<keyword id="KW-0168">Coated pit</keyword>
<keyword id="KW-0175">Coiled coil</keyword>
<keyword id="KW-0968">Cytoplasmic vesicle</keyword>
<keyword id="KW-0903">Direct protein sequencing</keyword>
<keyword id="KW-0472">Membrane</keyword>
<keyword id="KW-0597">Phosphoprotein</keyword>
<keyword id="KW-1185">Reference proteome</keyword>
<proteinExistence type="evidence at protein level"/>
<dbReference type="EMBL" id="X52272">
    <property type="protein sequence ID" value="CAA36515.1"/>
    <property type="molecule type" value="Genomic_DNA"/>
</dbReference>
<dbReference type="EMBL" id="Z72952">
    <property type="protein sequence ID" value="CAA97192.1"/>
    <property type="molecule type" value="Genomic_DNA"/>
</dbReference>
<dbReference type="EMBL" id="Z72953">
    <property type="protein sequence ID" value="CAA97193.1"/>
    <property type="molecule type" value="Genomic_DNA"/>
</dbReference>
<dbReference type="EMBL" id="AY558272">
    <property type="protein sequence ID" value="AAS56598.1"/>
    <property type="molecule type" value="Genomic_DNA"/>
</dbReference>
<dbReference type="EMBL" id="BK006941">
    <property type="protein sequence ID" value="DAA08261.1"/>
    <property type="molecule type" value="Genomic_DNA"/>
</dbReference>
<dbReference type="PIR" id="A36425">
    <property type="entry name" value="A36425"/>
</dbReference>
<dbReference type="RefSeq" id="NP_011683.3">
    <property type="nucleotide sequence ID" value="NM_001181296.3"/>
</dbReference>
<dbReference type="SMR" id="P17891"/>
<dbReference type="BioGRID" id="33419">
    <property type="interactions" value="415"/>
</dbReference>
<dbReference type="ComplexPortal" id="CPX-1616">
    <property type="entry name" value="Clathrin complex"/>
</dbReference>
<dbReference type="DIP" id="DIP-2280N"/>
<dbReference type="FunCoup" id="P17891">
    <property type="interactions" value="461"/>
</dbReference>
<dbReference type="IntAct" id="P17891">
    <property type="interactions" value="13"/>
</dbReference>
<dbReference type="MINT" id="P17891"/>
<dbReference type="STRING" id="4932.YGR167W"/>
<dbReference type="iPTMnet" id="P17891"/>
<dbReference type="PaxDb" id="4932-YGR167W"/>
<dbReference type="PeptideAtlas" id="P17891"/>
<dbReference type="EnsemblFungi" id="YGR167W_mRNA">
    <property type="protein sequence ID" value="YGR167W"/>
    <property type="gene ID" value="YGR167W"/>
</dbReference>
<dbReference type="GeneID" id="853077"/>
<dbReference type="KEGG" id="sce:YGR167W"/>
<dbReference type="AGR" id="SGD:S000003399"/>
<dbReference type="SGD" id="S000003399">
    <property type="gene designation" value="CLC1"/>
</dbReference>
<dbReference type="VEuPathDB" id="FungiDB:YGR167W"/>
<dbReference type="eggNOG" id="KOG4031">
    <property type="taxonomic scope" value="Eukaryota"/>
</dbReference>
<dbReference type="HOGENOM" id="CLU_069856_0_1_1"/>
<dbReference type="InParanoid" id="P17891"/>
<dbReference type="OMA" id="FYENYNT"/>
<dbReference type="OrthoDB" id="5512at2759"/>
<dbReference type="BioCyc" id="YEAST:G3O-30865-MONOMER"/>
<dbReference type="Reactome" id="R-SCE-432720">
    <property type="pathway name" value="Lysosome Vesicle Biogenesis"/>
</dbReference>
<dbReference type="Reactome" id="R-SCE-437239">
    <property type="pathway name" value="Recycling pathway of L1"/>
</dbReference>
<dbReference type="Reactome" id="R-SCE-8856828">
    <property type="pathway name" value="Clathrin-mediated endocytosis"/>
</dbReference>
<dbReference type="Reactome" id="R-SCE-8866427">
    <property type="pathway name" value="VLDLR internalisation and degradation"/>
</dbReference>
<dbReference type="Reactome" id="R-SCE-8964038">
    <property type="pathway name" value="LDL clearance"/>
</dbReference>
<dbReference type="BioGRID-ORCS" id="853077">
    <property type="hits" value="9 hits in 10 CRISPR screens"/>
</dbReference>
<dbReference type="PRO" id="PR:P17891"/>
<dbReference type="Proteomes" id="UP000002311">
    <property type="component" value="Chromosome VII"/>
</dbReference>
<dbReference type="RNAct" id="P17891">
    <property type="molecule type" value="protein"/>
</dbReference>
<dbReference type="GO" id="GO:0030132">
    <property type="term" value="C:clathrin coat of coated pit"/>
    <property type="evidence" value="ECO:0007669"/>
    <property type="project" value="InterPro"/>
</dbReference>
<dbReference type="GO" id="GO:0030130">
    <property type="term" value="C:clathrin coat of trans-Golgi network vesicle"/>
    <property type="evidence" value="ECO:0007669"/>
    <property type="project" value="InterPro"/>
</dbReference>
<dbReference type="GO" id="GO:0071439">
    <property type="term" value="C:clathrin complex"/>
    <property type="evidence" value="ECO:0000353"/>
    <property type="project" value="ComplexPortal"/>
</dbReference>
<dbReference type="GO" id="GO:0030125">
    <property type="term" value="C:clathrin vesicle coat"/>
    <property type="evidence" value="ECO:0000318"/>
    <property type="project" value="GO_Central"/>
</dbReference>
<dbReference type="GO" id="GO:0005886">
    <property type="term" value="C:plasma membrane"/>
    <property type="evidence" value="ECO:0000318"/>
    <property type="project" value="GO_Central"/>
</dbReference>
<dbReference type="GO" id="GO:0005802">
    <property type="term" value="C:trans-Golgi network"/>
    <property type="evidence" value="ECO:0000314"/>
    <property type="project" value="SGD"/>
</dbReference>
<dbReference type="GO" id="GO:0005516">
    <property type="term" value="F:calmodulin binding"/>
    <property type="evidence" value="ECO:0007669"/>
    <property type="project" value="UniProtKB-KW"/>
</dbReference>
<dbReference type="GO" id="GO:0032050">
    <property type="term" value="F:clathrin heavy chain binding"/>
    <property type="evidence" value="ECO:0000318"/>
    <property type="project" value="GO_Central"/>
</dbReference>
<dbReference type="GO" id="GO:0005198">
    <property type="term" value="F:structural molecule activity"/>
    <property type="evidence" value="ECO:0000304"/>
    <property type="project" value="SGD"/>
</dbReference>
<dbReference type="GO" id="GO:0048268">
    <property type="term" value="P:clathrin coat assembly"/>
    <property type="evidence" value="ECO:0000303"/>
    <property type="project" value="ComplexPortal"/>
</dbReference>
<dbReference type="GO" id="GO:0072583">
    <property type="term" value="P:clathrin-dependent endocytosis"/>
    <property type="evidence" value="ECO:0000318"/>
    <property type="project" value="GO_Central"/>
</dbReference>
<dbReference type="GO" id="GO:0006897">
    <property type="term" value="P:endocytosis"/>
    <property type="evidence" value="ECO:0000314"/>
    <property type="project" value="SGD"/>
</dbReference>
<dbReference type="GO" id="GO:0006886">
    <property type="term" value="P:intracellular protein transport"/>
    <property type="evidence" value="ECO:0007669"/>
    <property type="project" value="InterPro"/>
</dbReference>
<dbReference type="GO" id="GO:0045807">
    <property type="term" value="P:positive regulation of endocytosis"/>
    <property type="evidence" value="ECO:0000315"/>
    <property type="project" value="SGD"/>
</dbReference>
<dbReference type="GO" id="GO:0065003">
    <property type="term" value="P:protein-containing complex assembly"/>
    <property type="evidence" value="ECO:0000315"/>
    <property type="project" value="SGD"/>
</dbReference>
<dbReference type="InterPro" id="IPR000996">
    <property type="entry name" value="Clathrin_L-chain"/>
</dbReference>
<dbReference type="PANTHER" id="PTHR10639">
    <property type="entry name" value="CLATHRIN LIGHT CHAIN"/>
    <property type="match status" value="1"/>
</dbReference>
<dbReference type="PANTHER" id="PTHR10639:SF7">
    <property type="entry name" value="CLATHRIN LIGHT CHAIN"/>
    <property type="match status" value="1"/>
</dbReference>
<dbReference type="Pfam" id="PF01086">
    <property type="entry name" value="Clathrin_lg_ch"/>
    <property type="match status" value="1"/>
</dbReference>
<dbReference type="PROSITE" id="PS00581">
    <property type="entry name" value="CLATHRIN_LIGHT_CHN_2"/>
    <property type="match status" value="1"/>
</dbReference>
<reference key="1">
    <citation type="journal article" date="1990" name="J. Cell Biol.">
        <title>Yeast clathrin has a distinctive light chain that is important for cell growth.</title>
        <authorList>
            <person name="Silveira L.A."/>
            <person name="Wong D.H."/>
            <person name="Masiarz F.R."/>
            <person name="Schekman R."/>
        </authorList>
    </citation>
    <scope>NUCLEOTIDE SEQUENCE [GENOMIC DNA]</scope>
    <scope>PROTEIN SEQUENCE OF 31-39</scope>
</reference>
<reference key="2">
    <citation type="journal article" date="1997" name="Yeast">
        <title>Sequence analysis of 203 kilobases from Saccharomyces cerevisiae chromosome VII.</title>
        <authorList>
            <person name="Rieger M."/>
            <person name="Brueckner M."/>
            <person name="Schaefer M."/>
            <person name="Mueller-Auer S."/>
        </authorList>
    </citation>
    <scope>NUCLEOTIDE SEQUENCE [GENOMIC DNA]</scope>
    <source>
        <strain>ATCC 204508 / S288c</strain>
    </source>
</reference>
<reference key="3">
    <citation type="journal article" date="1997" name="Nature">
        <title>The nucleotide sequence of Saccharomyces cerevisiae chromosome VII.</title>
        <authorList>
            <person name="Tettelin H."/>
            <person name="Agostoni-Carbone M.L."/>
            <person name="Albermann K."/>
            <person name="Albers M."/>
            <person name="Arroyo J."/>
            <person name="Backes U."/>
            <person name="Barreiros T."/>
            <person name="Bertani I."/>
            <person name="Bjourson A.J."/>
            <person name="Brueckner M."/>
            <person name="Bruschi C.V."/>
            <person name="Carignani G."/>
            <person name="Castagnoli L."/>
            <person name="Cerdan E."/>
            <person name="Clemente M.L."/>
            <person name="Coblenz A."/>
            <person name="Coglievina M."/>
            <person name="Coissac E."/>
            <person name="Defoor E."/>
            <person name="Del Bino S."/>
            <person name="Delius H."/>
            <person name="Delneri D."/>
            <person name="de Wergifosse P."/>
            <person name="Dujon B."/>
            <person name="Durand P."/>
            <person name="Entian K.-D."/>
            <person name="Eraso P."/>
            <person name="Escribano V."/>
            <person name="Fabiani L."/>
            <person name="Fartmann B."/>
            <person name="Feroli F."/>
            <person name="Feuermann M."/>
            <person name="Frontali L."/>
            <person name="Garcia-Gonzalez M."/>
            <person name="Garcia-Saez M.I."/>
            <person name="Goffeau A."/>
            <person name="Guerreiro P."/>
            <person name="Hani J."/>
            <person name="Hansen M."/>
            <person name="Hebling U."/>
            <person name="Hernandez K."/>
            <person name="Heumann K."/>
            <person name="Hilger F."/>
            <person name="Hofmann B."/>
            <person name="Indge K.J."/>
            <person name="James C.M."/>
            <person name="Klima R."/>
            <person name="Koetter P."/>
            <person name="Kramer B."/>
            <person name="Kramer W."/>
            <person name="Lauquin G."/>
            <person name="Leuther H."/>
            <person name="Louis E.J."/>
            <person name="Maillier E."/>
            <person name="Marconi A."/>
            <person name="Martegani E."/>
            <person name="Mazon M.J."/>
            <person name="Mazzoni C."/>
            <person name="McReynolds A.D.K."/>
            <person name="Melchioretto P."/>
            <person name="Mewes H.-W."/>
            <person name="Minenkova O."/>
            <person name="Mueller-Auer S."/>
            <person name="Nawrocki A."/>
            <person name="Netter P."/>
            <person name="Neu R."/>
            <person name="Nombela C."/>
            <person name="Oliver S.G."/>
            <person name="Panzeri L."/>
            <person name="Paoluzi S."/>
            <person name="Plevani P."/>
            <person name="Portetelle D."/>
            <person name="Portillo F."/>
            <person name="Potier S."/>
            <person name="Purnelle B."/>
            <person name="Rieger M."/>
            <person name="Riles L."/>
            <person name="Rinaldi T."/>
            <person name="Robben J."/>
            <person name="Rodrigues-Pousada C."/>
            <person name="Rodriguez-Belmonte E."/>
            <person name="Rodriguez-Torres A.M."/>
            <person name="Rose M."/>
            <person name="Ruzzi M."/>
            <person name="Saliola M."/>
            <person name="Sanchez-Perez M."/>
            <person name="Schaefer B."/>
            <person name="Schaefer M."/>
            <person name="Scharfe M."/>
            <person name="Schmidheini T."/>
            <person name="Schreer A."/>
            <person name="Skala J."/>
            <person name="Souciet J.-L."/>
            <person name="Steensma H.Y."/>
            <person name="Talla E."/>
            <person name="Thierry A."/>
            <person name="Vandenbol M."/>
            <person name="van der Aart Q.J.M."/>
            <person name="Van Dyck L."/>
            <person name="Vanoni M."/>
            <person name="Verhasselt P."/>
            <person name="Voet M."/>
            <person name="Volckaert G."/>
            <person name="Wambutt R."/>
            <person name="Watson M.D."/>
            <person name="Weber N."/>
            <person name="Wedler E."/>
            <person name="Wedler H."/>
            <person name="Wipfli P."/>
            <person name="Wolf K."/>
            <person name="Wright L.F."/>
            <person name="Zaccaria P."/>
            <person name="Zimmermann M."/>
            <person name="Zollner A."/>
            <person name="Kleine K."/>
        </authorList>
    </citation>
    <scope>NUCLEOTIDE SEQUENCE [LARGE SCALE GENOMIC DNA]</scope>
    <source>
        <strain>ATCC 204508 / S288c</strain>
    </source>
</reference>
<reference key="4">
    <citation type="journal article" date="2014" name="G3 (Bethesda)">
        <title>The reference genome sequence of Saccharomyces cerevisiae: Then and now.</title>
        <authorList>
            <person name="Engel S.R."/>
            <person name="Dietrich F.S."/>
            <person name="Fisk D.G."/>
            <person name="Binkley G."/>
            <person name="Balakrishnan R."/>
            <person name="Costanzo M.C."/>
            <person name="Dwight S.S."/>
            <person name="Hitz B.C."/>
            <person name="Karra K."/>
            <person name="Nash R.S."/>
            <person name="Weng S."/>
            <person name="Wong E.D."/>
            <person name="Lloyd P."/>
            <person name="Skrzypek M.S."/>
            <person name="Miyasato S.R."/>
            <person name="Simison M."/>
            <person name="Cherry J.M."/>
        </authorList>
    </citation>
    <scope>GENOME REANNOTATION</scope>
    <source>
        <strain>ATCC 204508 / S288c</strain>
    </source>
</reference>
<reference key="5">
    <citation type="journal article" date="2007" name="Genome Res.">
        <title>Approaching a complete repository of sequence-verified protein-encoding clones for Saccharomyces cerevisiae.</title>
        <authorList>
            <person name="Hu Y."/>
            <person name="Rolfs A."/>
            <person name="Bhullar B."/>
            <person name="Murthy T.V.S."/>
            <person name="Zhu C."/>
            <person name="Berger M.F."/>
            <person name="Camargo A.A."/>
            <person name="Kelley F."/>
            <person name="McCarron S."/>
            <person name="Jepson D."/>
            <person name="Richardson A."/>
            <person name="Raphael J."/>
            <person name="Moreira D."/>
            <person name="Taycher E."/>
            <person name="Zuo D."/>
            <person name="Mohr S."/>
            <person name="Kane M.F."/>
            <person name="Williamson J."/>
            <person name="Simpson A.J.G."/>
            <person name="Bulyk M.L."/>
            <person name="Harlow E."/>
            <person name="Marsischky G."/>
            <person name="Kolodner R.D."/>
            <person name="LaBaer J."/>
        </authorList>
    </citation>
    <scope>NUCLEOTIDE SEQUENCE [GENOMIC DNA]</scope>
    <source>
        <strain>ATCC 204508 / S288c</strain>
    </source>
</reference>
<reference key="6">
    <citation type="journal article" date="2000" name="Curr. Biol.">
        <title>The auxilin-like phosphoprotein Swa2p is required for clathrin function in yeast.</title>
        <authorList>
            <person name="Gall W.E."/>
            <person name="Higginbotham M.A."/>
            <person name="Chen C.-Y."/>
            <person name="Ingram M.F."/>
            <person name="Cyr D.M."/>
            <person name="Graham T.R."/>
        </authorList>
    </citation>
    <scope>INTERACTION WITH SWA2</scope>
</reference>
<reference key="7">
    <citation type="journal article" date="2003" name="Nature">
        <title>Global analysis of protein expression in yeast.</title>
        <authorList>
            <person name="Ghaemmaghami S."/>
            <person name="Huh W.-K."/>
            <person name="Bower K."/>
            <person name="Howson R.W."/>
            <person name="Belle A."/>
            <person name="Dephoure N."/>
            <person name="O'Shea E.K."/>
            <person name="Weissman J.S."/>
        </authorList>
    </citation>
    <scope>LEVEL OF PROTEIN EXPRESSION [LARGE SCALE ANALYSIS]</scope>
</reference>
<reference key="8">
    <citation type="journal article" date="2007" name="J. Proteome Res.">
        <title>Large-scale phosphorylation analysis of alpha-factor-arrested Saccharomyces cerevisiae.</title>
        <authorList>
            <person name="Li X."/>
            <person name="Gerber S.A."/>
            <person name="Rudner A.D."/>
            <person name="Beausoleil S.A."/>
            <person name="Haas W."/>
            <person name="Villen J."/>
            <person name="Elias J.E."/>
            <person name="Gygi S.P."/>
        </authorList>
    </citation>
    <scope>PHOSPHORYLATION [LARGE SCALE ANALYSIS] AT THR-49 AND SER-52</scope>
    <scope>IDENTIFICATION BY MASS SPECTROMETRY [LARGE SCALE ANALYSIS]</scope>
    <source>
        <strain>ADR376</strain>
    </source>
</reference>
<reference key="9">
    <citation type="journal article" date="2008" name="Mol. Cell. Proteomics">
        <title>A multidimensional chromatography technology for in-depth phosphoproteome analysis.</title>
        <authorList>
            <person name="Albuquerque C.P."/>
            <person name="Smolka M.B."/>
            <person name="Payne S.H."/>
            <person name="Bafna V."/>
            <person name="Eng J."/>
            <person name="Zhou H."/>
        </authorList>
    </citation>
    <scope>PHOSPHORYLATION [LARGE SCALE ANALYSIS] AT SER-52</scope>
    <scope>IDENTIFICATION BY MASS SPECTROMETRY [LARGE SCALE ANALYSIS]</scope>
</reference>